<reference key="1">
    <citation type="journal article" date="2004" name="Mol. Biol. Evol.">
        <title>Chloroplast phylogeny indicates that bryophytes are monophyletic.</title>
        <authorList>
            <person name="Nishiyama T."/>
            <person name="Wolf P.G."/>
            <person name="Kugita M."/>
            <person name="Sinclair R.B."/>
            <person name="Sugita M."/>
            <person name="Sugiura C."/>
            <person name="Wakasugi T."/>
            <person name="Yamada K."/>
            <person name="Yoshinaga K."/>
            <person name="Yamaguchi K."/>
            <person name="Ueda K."/>
            <person name="Hasebe M."/>
        </authorList>
    </citation>
    <scope>NUCLEOTIDE SEQUENCE [LARGE SCALE GENOMIC DNA]</scope>
    <source>
        <strain>Kingyoku</strain>
    </source>
</reference>
<accession>Q8WHW9</accession>
<proteinExistence type="inferred from homology"/>
<keyword id="KW-0067">ATP-binding</keyword>
<keyword id="KW-0150">Chloroplast</keyword>
<keyword id="KW-0547">Nucleotide-binding</keyword>
<keyword id="KW-0934">Plastid</keyword>
<geneLocation type="chloroplast"/>
<name>YCF2_PSINU</name>
<dbReference type="EMBL" id="AP004638">
    <property type="protein sequence ID" value="BAB84296.1"/>
    <property type="molecule type" value="Genomic_DNA"/>
</dbReference>
<dbReference type="RefSeq" id="NP_569607.1">
    <property type="nucleotide sequence ID" value="NC_003386.1"/>
</dbReference>
<dbReference type="SMR" id="Q8WHW9"/>
<dbReference type="GeneID" id="2545233"/>
<dbReference type="GO" id="GO:0009570">
    <property type="term" value="C:chloroplast stroma"/>
    <property type="evidence" value="ECO:0007669"/>
    <property type="project" value="UniProtKB-SubCell"/>
</dbReference>
<dbReference type="GO" id="GO:0005524">
    <property type="term" value="F:ATP binding"/>
    <property type="evidence" value="ECO:0007669"/>
    <property type="project" value="UniProtKB-KW"/>
</dbReference>
<dbReference type="GO" id="GO:0016887">
    <property type="term" value="F:ATP hydrolysis activity"/>
    <property type="evidence" value="ECO:0007669"/>
    <property type="project" value="InterPro"/>
</dbReference>
<dbReference type="CDD" id="cd19505">
    <property type="entry name" value="RecA-like_Ycf2"/>
    <property type="match status" value="1"/>
</dbReference>
<dbReference type="Gene3D" id="3.40.50.300">
    <property type="entry name" value="P-loop containing nucleotide triphosphate hydrolases"/>
    <property type="match status" value="1"/>
</dbReference>
<dbReference type="HAMAP" id="MF_01330">
    <property type="entry name" value="Ycf2"/>
    <property type="match status" value="1"/>
</dbReference>
<dbReference type="InterPro" id="IPR003959">
    <property type="entry name" value="ATPase_AAA_core"/>
</dbReference>
<dbReference type="InterPro" id="IPR027417">
    <property type="entry name" value="P-loop_NTPase"/>
</dbReference>
<dbReference type="InterPro" id="IPR008543">
    <property type="entry name" value="Uncharacterised_Ycf2"/>
</dbReference>
<dbReference type="PANTHER" id="PTHR33078:SF100">
    <property type="entry name" value="PROTEIN YCF2"/>
    <property type="match status" value="1"/>
</dbReference>
<dbReference type="PANTHER" id="PTHR33078">
    <property type="entry name" value="PROTEIN YCF2-RELATED"/>
    <property type="match status" value="1"/>
</dbReference>
<dbReference type="Pfam" id="PF00004">
    <property type="entry name" value="AAA"/>
    <property type="match status" value="1"/>
</dbReference>
<dbReference type="SUPFAM" id="SSF52540">
    <property type="entry name" value="P-loop containing nucleoside triphosphate hydrolases"/>
    <property type="match status" value="1"/>
</dbReference>
<feature type="chain" id="PRO_0000223068" description="Protein Ycf2">
    <location>
        <begin position="1"/>
        <end position="2313"/>
    </location>
</feature>
<feature type="binding site" evidence="1">
    <location>
        <begin position="1606"/>
        <end position="1613"/>
    </location>
    <ligand>
        <name>ATP</name>
        <dbReference type="ChEBI" id="CHEBI:30616"/>
    </ligand>
</feature>
<comment type="function">
    <text>Probable ATPase of unknown function. Its presence in a non-photosynthetic plant (Epifagus virginiana) and experiments in tobacco indicate that it has an essential function which is probably not related to photosynthesis.</text>
</comment>
<comment type="subcellular location">
    <subcellularLocation>
        <location evidence="1">Plastid</location>
        <location evidence="1">Chloroplast stroma</location>
    </subcellularLocation>
</comment>
<comment type="similarity">
    <text evidence="1">Belongs to the Ycf2 family.</text>
</comment>
<gene>
    <name evidence="1" type="primary">ycf2</name>
</gene>
<organism>
    <name type="scientific">Psilotum nudum</name>
    <name type="common">Whisk fern</name>
    <name type="synonym">Lycopodium nudum</name>
    <dbReference type="NCBI Taxonomy" id="3240"/>
    <lineage>
        <taxon>Eukaryota</taxon>
        <taxon>Viridiplantae</taxon>
        <taxon>Streptophyta</taxon>
        <taxon>Embryophyta</taxon>
        <taxon>Tracheophyta</taxon>
        <taxon>Polypodiopsida</taxon>
        <taxon>Ophioglossidae</taxon>
        <taxon>Psilotales</taxon>
        <taxon>Psilotaceae</taxon>
        <taxon>Psilotum</taxon>
    </lineage>
</organism>
<protein>
    <recommendedName>
        <fullName evidence="1">Protein Ycf2</fullName>
    </recommendedName>
</protein>
<evidence type="ECO:0000255" key="1">
    <source>
        <dbReference type="HAMAP-Rule" id="MF_01330"/>
    </source>
</evidence>
<sequence>MNKELIQINLPANIQNFKEIDLSLYYLRFWYKLNIRKTIVRIWTNRNNLIKLFDFQILSSFILRNLHSSRSQKKIFPLKYLFIITIPLFLYRINSRTLLQRENLVLTKLVNTTVRSSGVIQGISRESYTDLCYLPARVRKLPVCNTTNCTDIEWWKDWIVKDILPSWKISQRLINEVEMLLREKNISNLRHFFELYTFIFANHSSLAWRYDFNSFFVRKQNDRMNCDLGQQSDFLEKNHFFSSVMIAFCEKILFEAEDLSNKQEYKSNLDLIHSRFWIYTNQYHYMNLSQPLIVHYIRHLKDFRVREIFLNLFEDFVEFYSWAYYSANFSTWQRYEEKLGIIKDLVRQALISSDTVSSFDNTTAIQSLFAEILSQFSVYLLSRVQTSGQLTGLRIEKLRNMDLKMSKRDLFQNIGIITKNEDPKVFVSESSISNFTNDSYWSLNYYKYYLFNKWNWKQLLVPVESKMNIRYQTMGYPFSDTNYSIEYEKAYEAIGETAKSFIETLSPRDKRTLVNRNSKSISLSIVKPFHSNLWNKDMLPLHEHSLSVKSISEKIKLLEKQQYIDLRDDNFSDIFQIVDIWGRSRHYHSSRYCEVDNFLLRKRIGRAKSHVHELSSLISSIVNLPSSIFERAIKLCSSHQYLQFKILLLPRLNKIYLLLTKPNLGFVEIIKNDHCNNEEPDSVEDETILVKNTSINNIESFTKPNEMTDVEFDSTTNLLTKENIDYVQDTIKNDLFLMWNNMKDIMNISPISFLIKIDKHNDLTSLCSQYIVYIYQYVFIKSGGYLSKLRSQIKPWVNNDYFCCLMKQTIDRDLPNWENSLNRLNELIIQIDQIYVNVHNNLSIIEDWEDWDYFSNYVYLDPIYEKLNFFFNRLIGNILFEDKKAIKYYSKSLLLTDEVISNTLETLETFLPHLKYIKNFLFNHSSILEQFWHNRSDISRDLGSQVSNKLVLLLAHSKIPSNSIFSNIAKNGNILIEDLAYREIDKQNNWFNCFNARNRIPLKHSFDEKNAIFFLEHFANPQLNYNERLYFPKRKIFIKGYNRAYADIIINDLPRLINGFRSFIRRKGFCLEGTNFFQIKSHLFNKIPNKEYPHSILTQTIQILHRFYLIKEFGSSIQLKSLSTEQVNLFDLQERFLNSSSIRKQLVNIGVSDYWQPLLDSDPTNDFHLMNISTKDQLNQNGGSGSIIDEKSYHNDYLYSKFFGNLEEYDMLFRLKIPELSIHFIPDDSKIESLEKHIEFNQDIKNIYVDKNIFRSNLLMRFNERLRVINILELLRVSTIAKKWLFFHEYIPWFFTIEWWKYINSAVPNTFSETLLNISDQWISNLYYITNNIKNSITYLWVNLEFKLKAYSFDNKIYRFDSSIGVIYKEGCSSLRWSPLRLMSDSNVLYLTLIIPLLFSYIVFQHYLSIFTGFHSFSLWKRFEVFNYFLDPFNKIYIEKVLSFFPPARQKSIKPSLVDYLKRFFIYLTYGSSKRKVDVLLSYGKSLDIFREENNLVVHYLITNRILSQDGFHFHLNSNNMLNSNIKEFSSKLGLNYLQYLANIYKTNLSNFPISQLDLVERCLFFTFWQNIISPGIPGQFHILQNTPIPLQLGSSFPSKGILLIGSMETGRSYLIKSLAANYCLPLIQIPINKLLDKKVHFESKSVVLFPGESVRRLTLTFELVKRMSPCIVWIQDIHELNLDRVMNELEVDPKYLFCSLLKCLSNNSSNYYVRNNIIIAPTHIPSKVDPSFISPNRLDQLINIRRLNIHQREREFLALLRVKGFYYKGDLSHLGELGSITRGYSKRDLTVLANGVLLLSITQKESFVCQNSMELALHRQVRALDNKSKNGLRYEMLFYRIGKAIIQNSLINMPYIDSLSINPKLLRKRFSFLSNWYLETSLAESTVKELTLLPYIMGCLAGIAARDSWFILERKQESLVTLDRISENDIQLAFGILESLLADFSGLEICGKNDHNSLLQQTNKQYFNRIQKVLFSENDETILKENTKSINPYLSGANRYFFLARSSCLSRISFLRSSIYESMELSSESNTSYKMKESNENLVQHTERDLDSTKKDQDQILKGKDEFAGYRRILRDYRERPIYTTLENQLDHLDQLDNASLLDPFLKSNMDKSFMQYEMQYYPSDKLVLFLGRRFIWNMAGSSFIRDNAAFQRNKLFAEGDEVKRLYIAYGAIKERRKRLSFNKYIKKIDSQESSQNLITKQEKRHFENVRTNQMIKSYFGIPRLLPTVYLYQSIFIENTQDRYNHLNLLNYRHSLSSSREGLIYMILLESYHYLLNLFLSNRIILEKMAIILLKNTLISSKEVEQILSKLK</sequence>